<comment type="function">
    <text evidence="5 7">Cell wall formation. Synthesis of cross-linked peptidoglycan from the lipid intermediates. The enzyme has a penicillin-insensitive transglycosylase N-terminal domain (formation of linear glycan strands) and a penicillin-sensitive transpeptidase C-terminal domain (cross-linking of the peptide subunits) (Probable). Has a partially redundant function with PBP-2A (pbpA) during spore outgrowth (PubMed:9851991).</text>
</comment>
<comment type="catalytic activity">
    <reaction evidence="1">
        <text>[GlcNAc-(1-&gt;4)-Mur2Ac(oyl-L-Ala-gamma-D-Glu-L-Lys-D-Ala-D-Ala)](n)-di-trans,octa-cis-undecaprenyl diphosphate + beta-D-GlcNAc-(1-&gt;4)-Mur2Ac(oyl-L-Ala-gamma-D-Glu-L-Lys-D-Ala-D-Ala)-di-trans,octa-cis-undecaprenyl diphosphate = [GlcNAc-(1-&gt;4)-Mur2Ac(oyl-L-Ala-gamma-D-Glu-L-Lys-D-Ala-D-Ala)](n+1)-di-trans,octa-cis-undecaprenyl diphosphate + di-trans,octa-cis-undecaprenyl diphosphate + H(+)</text>
        <dbReference type="Rhea" id="RHEA:23708"/>
        <dbReference type="Rhea" id="RHEA-COMP:9602"/>
        <dbReference type="Rhea" id="RHEA-COMP:9603"/>
        <dbReference type="ChEBI" id="CHEBI:15378"/>
        <dbReference type="ChEBI" id="CHEBI:58405"/>
        <dbReference type="ChEBI" id="CHEBI:60033"/>
        <dbReference type="ChEBI" id="CHEBI:78435"/>
        <dbReference type="EC" id="2.4.99.28"/>
    </reaction>
</comment>
<comment type="catalytic activity">
    <reaction evidence="1">
        <text>Preferential cleavage: (Ac)2-L-Lys-D-Ala-|-D-Ala. Also transpeptidation of peptidyl-alanyl moieties that are N-acyl substituents of D-alanine.</text>
        <dbReference type="EC" id="3.4.16.4"/>
    </reaction>
</comment>
<comment type="subcellular location">
    <subcellularLocation>
        <location evidence="7">Cell membrane</location>
        <topology evidence="7">Peripheral membrane protein</topology>
    </subcellularLocation>
</comment>
<comment type="developmental stage">
    <text evidence="4">Expression increases during vegetative growth and decreases soon after entry into sporulation.</text>
</comment>
<comment type="PTM">
    <text evidence="4">The N-terminus is blocked.</text>
</comment>
<comment type="disruption phenotype">
    <text evidence="4 5">No visible phenotype (PubMed:7961491). Double pbpA-pbpD deletions spores have greatly decreased spore outgrowth and peptidoglycan synthesis (PubMed:9851991).</text>
</comment>
<comment type="similarity">
    <text evidence="7">In the N-terminal section; belongs to the glycosyltransferase 51 family.</text>
</comment>
<comment type="similarity">
    <text evidence="7">In the C-terminal section; belongs to the transpeptidase family.</text>
</comment>
<comment type="caution">
    <text evidence="7">It is uncertain whether Met-1 or Met-3 is the initiator.</text>
</comment>
<dbReference type="EC" id="2.4.99.28" evidence="1"/>
<dbReference type="EC" id="3.4.16.4" evidence="1"/>
<dbReference type="EMBL" id="U11882">
    <property type="protein sequence ID" value="AAA64943.1"/>
    <property type="molecule type" value="Genomic_DNA"/>
</dbReference>
<dbReference type="EMBL" id="Z93933">
    <property type="protein sequence ID" value="CAB07915.1"/>
    <property type="molecule type" value="Genomic_DNA"/>
</dbReference>
<dbReference type="EMBL" id="AL009126">
    <property type="protein sequence ID" value="CAB15138.2"/>
    <property type="molecule type" value="Genomic_DNA"/>
</dbReference>
<dbReference type="PIR" id="A55220">
    <property type="entry name" value="A55220"/>
</dbReference>
<dbReference type="RefSeq" id="NP_391027.2">
    <property type="nucleotide sequence ID" value="NC_000964.3"/>
</dbReference>
<dbReference type="RefSeq" id="WP_010886602.1">
    <property type="nucleotide sequence ID" value="NZ_OZ025638.1"/>
</dbReference>
<dbReference type="SMR" id="P40750"/>
<dbReference type="FunCoup" id="P40750">
    <property type="interactions" value="57"/>
</dbReference>
<dbReference type="IntAct" id="P40750">
    <property type="interactions" value="1"/>
</dbReference>
<dbReference type="STRING" id="224308.BSU31490"/>
<dbReference type="BindingDB" id="P40750"/>
<dbReference type="ChEMBL" id="CHEMBL3112382"/>
<dbReference type="CAZy" id="GT51">
    <property type="family name" value="Glycosyltransferase Family 51"/>
</dbReference>
<dbReference type="MEROPS" id="X52.001"/>
<dbReference type="jPOST" id="P40750"/>
<dbReference type="PaxDb" id="224308-BSU31490"/>
<dbReference type="EnsemblBacteria" id="CAB15138">
    <property type="protein sequence ID" value="CAB15138"/>
    <property type="gene ID" value="BSU_31490"/>
</dbReference>
<dbReference type="GeneID" id="938851"/>
<dbReference type="KEGG" id="bsu:BSU31490"/>
<dbReference type="PATRIC" id="fig|224308.43.peg.3297"/>
<dbReference type="eggNOG" id="COG0744">
    <property type="taxonomic scope" value="Bacteria"/>
</dbReference>
<dbReference type="InParanoid" id="P40750"/>
<dbReference type="OrthoDB" id="9766909at2"/>
<dbReference type="PhylomeDB" id="P40750"/>
<dbReference type="BioCyc" id="BSUB:BSU31490-MONOMER"/>
<dbReference type="PRO" id="PR:P40750"/>
<dbReference type="Proteomes" id="UP000001570">
    <property type="component" value="Chromosome"/>
</dbReference>
<dbReference type="GO" id="GO:0030288">
    <property type="term" value="C:outer membrane-bounded periplasmic space"/>
    <property type="evidence" value="ECO:0000318"/>
    <property type="project" value="GO_Central"/>
</dbReference>
<dbReference type="GO" id="GO:0005886">
    <property type="term" value="C:plasma membrane"/>
    <property type="evidence" value="ECO:0007669"/>
    <property type="project" value="UniProtKB-SubCell"/>
</dbReference>
<dbReference type="GO" id="GO:0008658">
    <property type="term" value="F:penicillin binding"/>
    <property type="evidence" value="ECO:0007669"/>
    <property type="project" value="InterPro"/>
</dbReference>
<dbReference type="GO" id="GO:0008955">
    <property type="term" value="F:peptidoglycan glycosyltransferase activity"/>
    <property type="evidence" value="ECO:0000318"/>
    <property type="project" value="GO_Central"/>
</dbReference>
<dbReference type="GO" id="GO:0009002">
    <property type="term" value="F:serine-type D-Ala-D-Ala carboxypeptidase activity"/>
    <property type="evidence" value="ECO:0007669"/>
    <property type="project" value="UniProtKB-EC"/>
</dbReference>
<dbReference type="GO" id="GO:0071555">
    <property type="term" value="P:cell wall organization"/>
    <property type="evidence" value="ECO:0007669"/>
    <property type="project" value="UniProtKB-KW"/>
</dbReference>
<dbReference type="GO" id="GO:0009252">
    <property type="term" value="P:peptidoglycan biosynthetic process"/>
    <property type="evidence" value="ECO:0000318"/>
    <property type="project" value="GO_Central"/>
</dbReference>
<dbReference type="GO" id="GO:0006508">
    <property type="term" value="P:proteolysis"/>
    <property type="evidence" value="ECO:0007669"/>
    <property type="project" value="UniProtKB-KW"/>
</dbReference>
<dbReference type="GO" id="GO:0008360">
    <property type="term" value="P:regulation of cell shape"/>
    <property type="evidence" value="ECO:0007669"/>
    <property type="project" value="UniProtKB-KW"/>
</dbReference>
<dbReference type="FunFam" id="1.10.3810.10:FF:000001">
    <property type="entry name" value="Penicillin-binding protein 1A"/>
    <property type="match status" value="1"/>
</dbReference>
<dbReference type="Gene3D" id="1.10.3810.10">
    <property type="entry name" value="Biosynthetic peptidoglycan transglycosylase-like"/>
    <property type="match status" value="1"/>
</dbReference>
<dbReference type="Gene3D" id="3.40.710.10">
    <property type="entry name" value="DD-peptidase/beta-lactamase superfamily"/>
    <property type="match status" value="1"/>
</dbReference>
<dbReference type="InterPro" id="IPR012338">
    <property type="entry name" value="Beta-lactam/transpept-like"/>
</dbReference>
<dbReference type="InterPro" id="IPR001264">
    <property type="entry name" value="Glyco_trans_51"/>
</dbReference>
<dbReference type="InterPro" id="IPR050396">
    <property type="entry name" value="Glycosyltr_51/Transpeptidase"/>
</dbReference>
<dbReference type="InterPro" id="IPR023346">
    <property type="entry name" value="Lysozyme-like_dom_sf"/>
</dbReference>
<dbReference type="InterPro" id="IPR036950">
    <property type="entry name" value="PBP_transglycosylase"/>
</dbReference>
<dbReference type="InterPro" id="IPR001460">
    <property type="entry name" value="PCN-bd_Tpept"/>
</dbReference>
<dbReference type="PANTHER" id="PTHR32282">
    <property type="entry name" value="BINDING PROTEIN TRANSPEPTIDASE, PUTATIVE-RELATED"/>
    <property type="match status" value="1"/>
</dbReference>
<dbReference type="PANTHER" id="PTHR32282:SF11">
    <property type="entry name" value="PENICILLIN-BINDING PROTEIN 1B"/>
    <property type="match status" value="1"/>
</dbReference>
<dbReference type="Pfam" id="PF00912">
    <property type="entry name" value="Transgly"/>
    <property type="match status" value="1"/>
</dbReference>
<dbReference type="Pfam" id="PF00905">
    <property type="entry name" value="Transpeptidase"/>
    <property type="match status" value="1"/>
</dbReference>
<dbReference type="SUPFAM" id="SSF56601">
    <property type="entry name" value="beta-lactamase/transpeptidase-like"/>
    <property type="match status" value="1"/>
</dbReference>
<dbReference type="SUPFAM" id="SSF53955">
    <property type="entry name" value="Lysozyme-like"/>
    <property type="match status" value="1"/>
</dbReference>
<accession>P40750</accession>
<accession>O05232</accession>
<reference key="1">
    <citation type="journal article" date="1994" name="J. Bacteriol.">
        <title>Cloning, nucleotide sequence, mutagenesis, and mapping of the Bacillus subtilis pbpD gene, which codes for penicillin-binding protein 4.</title>
        <authorList>
            <person name="Popham D.L."/>
            <person name="Setlow P."/>
        </authorList>
    </citation>
    <scope>NUCLEOTIDE SEQUENCE [GENOMIC DNA]</scope>
    <scope>PROTEIN SEQUENCE OF 317-331</scope>
    <scope>N-TERMINAL BLOCKAGE</scope>
    <scope>DEVELOPMENTAL STAGE</scope>
    <scope>DISRUPTION PHENOTYPE</scope>
    <source>
        <strain>168</strain>
    </source>
</reference>
<reference key="2">
    <citation type="journal article" date="1997" name="Microbiology">
        <title>Analysis of the Bacillus subtilis genome: cloning and nucleotide sequence of a 62 kb region between 275 degrees (rrnB) and 284 degrees (pai).</title>
        <authorList>
            <person name="Oudega B."/>
            <person name="Koningstein G."/>
            <person name="Rodrigues L."/>
            <person name="de Sales Ramon M."/>
            <person name="Hilbert H."/>
            <person name="Duesterhoeft A."/>
            <person name="Pohl T.M."/>
            <person name="Weitzenegger T."/>
        </authorList>
    </citation>
    <scope>NUCLEOTIDE SEQUENCE [GENOMIC DNA]</scope>
    <source>
        <strain>168</strain>
    </source>
</reference>
<reference key="3">
    <citation type="journal article" date="1997" name="Nature">
        <title>The complete genome sequence of the Gram-positive bacterium Bacillus subtilis.</title>
        <authorList>
            <person name="Kunst F."/>
            <person name="Ogasawara N."/>
            <person name="Moszer I."/>
            <person name="Albertini A.M."/>
            <person name="Alloni G."/>
            <person name="Azevedo V."/>
            <person name="Bertero M.G."/>
            <person name="Bessieres P."/>
            <person name="Bolotin A."/>
            <person name="Borchert S."/>
            <person name="Borriss R."/>
            <person name="Boursier L."/>
            <person name="Brans A."/>
            <person name="Braun M."/>
            <person name="Brignell S.C."/>
            <person name="Bron S."/>
            <person name="Brouillet S."/>
            <person name="Bruschi C.V."/>
            <person name="Caldwell B."/>
            <person name="Capuano V."/>
            <person name="Carter N.M."/>
            <person name="Choi S.-K."/>
            <person name="Codani J.-J."/>
            <person name="Connerton I.F."/>
            <person name="Cummings N.J."/>
            <person name="Daniel R.A."/>
            <person name="Denizot F."/>
            <person name="Devine K.M."/>
            <person name="Duesterhoeft A."/>
            <person name="Ehrlich S.D."/>
            <person name="Emmerson P.T."/>
            <person name="Entian K.-D."/>
            <person name="Errington J."/>
            <person name="Fabret C."/>
            <person name="Ferrari E."/>
            <person name="Foulger D."/>
            <person name="Fritz C."/>
            <person name="Fujita M."/>
            <person name="Fujita Y."/>
            <person name="Fuma S."/>
            <person name="Galizzi A."/>
            <person name="Galleron N."/>
            <person name="Ghim S.-Y."/>
            <person name="Glaser P."/>
            <person name="Goffeau A."/>
            <person name="Golightly E.J."/>
            <person name="Grandi G."/>
            <person name="Guiseppi G."/>
            <person name="Guy B.J."/>
            <person name="Haga K."/>
            <person name="Haiech J."/>
            <person name="Harwood C.R."/>
            <person name="Henaut A."/>
            <person name="Hilbert H."/>
            <person name="Holsappel S."/>
            <person name="Hosono S."/>
            <person name="Hullo M.-F."/>
            <person name="Itaya M."/>
            <person name="Jones L.-M."/>
            <person name="Joris B."/>
            <person name="Karamata D."/>
            <person name="Kasahara Y."/>
            <person name="Klaerr-Blanchard M."/>
            <person name="Klein C."/>
            <person name="Kobayashi Y."/>
            <person name="Koetter P."/>
            <person name="Koningstein G."/>
            <person name="Krogh S."/>
            <person name="Kumano M."/>
            <person name="Kurita K."/>
            <person name="Lapidus A."/>
            <person name="Lardinois S."/>
            <person name="Lauber J."/>
            <person name="Lazarevic V."/>
            <person name="Lee S.-M."/>
            <person name="Levine A."/>
            <person name="Liu H."/>
            <person name="Masuda S."/>
            <person name="Mauel C."/>
            <person name="Medigue C."/>
            <person name="Medina N."/>
            <person name="Mellado R.P."/>
            <person name="Mizuno M."/>
            <person name="Moestl D."/>
            <person name="Nakai S."/>
            <person name="Noback M."/>
            <person name="Noone D."/>
            <person name="O'Reilly M."/>
            <person name="Ogawa K."/>
            <person name="Ogiwara A."/>
            <person name="Oudega B."/>
            <person name="Park S.-H."/>
            <person name="Parro V."/>
            <person name="Pohl T.M."/>
            <person name="Portetelle D."/>
            <person name="Porwollik S."/>
            <person name="Prescott A.M."/>
            <person name="Presecan E."/>
            <person name="Pujic P."/>
            <person name="Purnelle B."/>
            <person name="Rapoport G."/>
            <person name="Rey M."/>
            <person name="Reynolds S."/>
            <person name="Rieger M."/>
            <person name="Rivolta C."/>
            <person name="Rocha E."/>
            <person name="Roche B."/>
            <person name="Rose M."/>
            <person name="Sadaie Y."/>
            <person name="Sato T."/>
            <person name="Scanlan E."/>
            <person name="Schleich S."/>
            <person name="Schroeter R."/>
            <person name="Scoffone F."/>
            <person name="Sekiguchi J."/>
            <person name="Sekowska A."/>
            <person name="Seror S.J."/>
            <person name="Serror P."/>
            <person name="Shin B.-S."/>
            <person name="Soldo B."/>
            <person name="Sorokin A."/>
            <person name="Tacconi E."/>
            <person name="Takagi T."/>
            <person name="Takahashi H."/>
            <person name="Takemaru K."/>
            <person name="Takeuchi M."/>
            <person name="Tamakoshi A."/>
            <person name="Tanaka T."/>
            <person name="Terpstra P."/>
            <person name="Tognoni A."/>
            <person name="Tosato V."/>
            <person name="Uchiyama S."/>
            <person name="Vandenbol M."/>
            <person name="Vannier F."/>
            <person name="Vassarotti A."/>
            <person name="Viari A."/>
            <person name="Wambutt R."/>
            <person name="Wedler E."/>
            <person name="Wedler H."/>
            <person name="Weitzenegger T."/>
            <person name="Winters P."/>
            <person name="Wipat A."/>
            <person name="Yamamoto H."/>
            <person name="Yamane K."/>
            <person name="Yasumoto K."/>
            <person name="Yata K."/>
            <person name="Yoshida K."/>
            <person name="Yoshikawa H.-F."/>
            <person name="Zumstein E."/>
            <person name="Yoshikawa H."/>
            <person name="Danchin A."/>
        </authorList>
    </citation>
    <scope>NUCLEOTIDE SEQUENCE [LARGE SCALE GENOMIC DNA]</scope>
    <source>
        <strain>168</strain>
    </source>
</reference>
<reference key="4">
    <citation type="journal article" date="2009" name="Microbiology">
        <title>From a consortium sequence to a unified sequence: the Bacillus subtilis 168 reference genome a decade later.</title>
        <authorList>
            <person name="Barbe V."/>
            <person name="Cruveiller S."/>
            <person name="Kunst F."/>
            <person name="Lenoble P."/>
            <person name="Meurice G."/>
            <person name="Sekowska A."/>
            <person name="Vallenet D."/>
            <person name="Wang T."/>
            <person name="Moszer I."/>
            <person name="Medigue C."/>
            <person name="Danchin A."/>
        </authorList>
    </citation>
    <scope>SEQUENCE REVISION TO 113-114</scope>
</reference>
<reference key="5">
    <citation type="journal article" date="1998" name="J. Bacteriol.">
        <title>Analysis of outgrowth of Bacillus subtilis spores lacking penicillin-binding protein 2a.</title>
        <authorList>
            <person name="Murray T."/>
            <person name="Popham D.L."/>
            <person name="Pearson C.B."/>
            <person name="Hand A.R."/>
            <person name="Setlow P."/>
        </authorList>
    </citation>
    <scope>FUNCTION</scope>
    <scope>DISRUPTION PHENOTYPE</scope>
    <source>
        <strain>168 / PS832</strain>
    </source>
</reference>
<gene>
    <name evidence="6" type="primary">pbpD</name>
    <name type="ordered locus">BSU31490</name>
</gene>
<keyword id="KW-0121">Carboxypeptidase</keyword>
<keyword id="KW-1003">Cell membrane</keyword>
<keyword id="KW-0133">Cell shape</keyword>
<keyword id="KW-0961">Cell wall biogenesis/degradation</keyword>
<keyword id="KW-0903">Direct protein sequencing</keyword>
<keyword id="KW-0328">Glycosyltransferase</keyword>
<keyword id="KW-0378">Hydrolase</keyword>
<keyword id="KW-0472">Membrane</keyword>
<keyword id="KW-0511">Multifunctional enzyme</keyword>
<keyword id="KW-0573">Peptidoglycan synthesis</keyword>
<keyword id="KW-0645">Protease</keyword>
<keyword id="KW-1185">Reference proteome</keyword>
<keyword id="KW-0732">Signal</keyword>
<keyword id="KW-0808">Transferase</keyword>
<sequence length="624" mass="70659">MTMLRKIIGWILLLCIIPLFAFTVIASGKEVKQMKSLDQVLDKNIDLKDISLVQNSYMYDRDGSLVSEIVSDHENRVLVPFNKIPEEVKQIFLTSEDRHFYEHKGFDFMGMVRATASNVKDKKIDQGASTITQQLSRNLYLSHERSFSRKLTELAYSYQLEKKYTKNEILEAYLNTIYFNNGVYGVGSAAQFYFSKPLKSLTVGEMAFICAIPNNPTLYDPLKHFDYTKSRQERLLKGLKDAGVITDKELKKAVKQKIKLDVEKREDKYPDYVSYVNDEFTQLVSESEGFDKRLQKASGKQKEKIENELSARVSTLMKDGVKIYTALDPYMQNQVVAQMNSKLPYADVQGGAAVINHQTHQIIALSGGKNYQKYDFNRAYQAYRQPGSSIKPLLDYGPYIEQTGATTSSTIDASKFCSKDYCPQNYNNRTYGTVTLDTAFKNSYNTPAIRMLDRVGIQKAFSYIEPYHFAKLVDSDYLLPAALGGFTNGMTPLEMTKAYTTFGNSGSYTPSHAITKVTDLKGKTLYKWNDKATQIFSVRTNMQLKKLMSSVVKSGTGKKAYFNAPYIGGKTGTSNDYHDMWFVGLTDTYTMGVWVGKDTPTSVEYLHSISPQLSIWKGTLQAAY</sequence>
<proteinExistence type="evidence at protein level"/>
<organism>
    <name type="scientific">Bacillus subtilis (strain 168)</name>
    <dbReference type="NCBI Taxonomy" id="224308"/>
    <lineage>
        <taxon>Bacteria</taxon>
        <taxon>Bacillati</taxon>
        <taxon>Bacillota</taxon>
        <taxon>Bacilli</taxon>
        <taxon>Bacillales</taxon>
        <taxon>Bacillaceae</taxon>
        <taxon>Bacillus</taxon>
    </lineage>
</organism>
<protein>
    <recommendedName>
        <fullName>Penicillin-binding protein 4</fullName>
        <shortName>PBP 4</shortName>
    </recommendedName>
    <domain>
        <recommendedName>
            <fullName>Penicillin-insensitive transglycosylase</fullName>
            <ecNumber evidence="1">2.4.99.28</ecNumber>
        </recommendedName>
        <alternativeName>
            <fullName>Peptidoglycan TGase</fullName>
        </alternativeName>
    </domain>
    <domain>
        <recommendedName>
            <fullName>Penicillin-sensitive transpeptidase</fullName>
            <ecNumber evidence="1">3.4.16.4</ecNumber>
        </recommendedName>
        <alternativeName>
            <fullName>DD-transpeptidase</fullName>
        </alternativeName>
    </domain>
</protein>
<feature type="signal peptide" evidence="3">
    <location>
        <begin position="1"/>
        <end position="21"/>
    </location>
</feature>
<feature type="chain" id="PRO_0000012147" description="Penicillin-binding protein 4">
    <location>
        <begin position="22"/>
        <end position="624"/>
    </location>
</feature>
<feature type="active site" description="Proton donor; for transglycosylase activity" evidence="2">
    <location>
        <position position="96"/>
    </location>
</feature>
<feature type="active site" description="Acyl-ester intermediate; for transpeptidase activity" evidence="2">
    <location>
        <position position="388"/>
    </location>
</feature>
<feature type="sequence conflict" description="In Ref. 1; AAA64943 and 2; CAB07915." evidence="7" ref="1 2">
    <original>RA</original>
    <variation>PP</variation>
    <location>
        <begin position="113"/>
        <end position="114"/>
    </location>
</feature>
<name>PBPD_BACSU</name>
<evidence type="ECO:0000250" key="1">
    <source>
        <dbReference type="UniProtKB" id="P02918"/>
    </source>
</evidence>
<evidence type="ECO:0000250" key="2">
    <source>
        <dbReference type="UniProtKB" id="P02919"/>
    </source>
</evidence>
<evidence type="ECO:0000255" key="3"/>
<evidence type="ECO:0000269" key="4">
    <source>
    </source>
</evidence>
<evidence type="ECO:0000269" key="5">
    <source>
    </source>
</evidence>
<evidence type="ECO:0000303" key="6">
    <source>
    </source>
</evidence>
<evidence type="ECO:0000305" key="7"/>